<protein>
    <recommendedName>
        <fullName evidence="1">Ribosome-recycling factor</fullName>
        <shortName evidence="1">RRF</shortName>
    </recommendedName>
    <alternativeName>
        <fullName evidence="1">Ribosome-releasing factor</fullName>
    </alternativeName>
</protein>
<reference key="1">
    <citation type="journal article" date="2013" name="Plant Physiol.">
        <title>A Nostoc punctiforme Sugar Transporter Necessary to Establish a Cyanobacterium-Plant Symbiosis.</title>
        <authorList>
            <person name="Ekman M."/>
            <person name="Picossi S."/>
            <person name="Campbell E.L."/>
            <person name="Meeks J.C."/>
            <person name="Flores E."/>
        </authorList>
    </citation>
    <scope>NUCLEOTIDE SEQUENCE [LARGE SCALE GENOMIC DNA]</scope>
    <source>
        <strain>ATCC 29133 / PCC 73102</strain>
    </source>
</reference>
<feature type="chain" id="PRO_1000090763" description="Ribosome-recycling factor">
    <location>
        <begin position="1"/>
        <end position="182"/>
    </location>
</feature>
<name>RRF_NOSP7</name>
<gene>
    <name evidence="1" type="primary">frr</name>
    <name type="ordered locus">Npun_F6137</name>
</gene>
<organism>
    <name type="scientific">Nostoc punctiforme (strain ATCC 29133 / PCC 73102)</name>
    <dbReference type="NCBI Taxonomy" id="63737"/>
    <lineage>
        <taxon>Bacteria</taxon>
        <taxon>Bacillati</taxon>
        <taxon>Cyanobacteriota</taxon>
        <taxon>Cyanophyceae</taxon>
        <taxon>Nostocales</taxon>
        <taxon>Nostocaceae</taxon>
        <taxon>Nostoc</taxon>
    </lineage>
</organism>
<dbReference type="EMBL" id="CP001037">
    <property type="protein sequence ID" value="ACC84425.1"/>
    <property type="molecule type" value="Genomic_DNA"/>
</dbReference>
<dbReference type="RefSeq" id="WP_012412365.1">
    <property type="nucleotide sequence ID" value="NC_010628.1"/>
</dbReference>
<dbReference type="SMR" id="B2IVW4"/>
<dbReference type="STRING" id="63737.Npun_F6137"/>
<dbReference type="EnsemblBacteria" id="ACC84425">
    <property type="protein sequence ID" value="ACC84425"/>
    <property type="gene ID" value="Npun_F6137"/>
</dbReference>
<dbReference type="KEGG" id="npu:Npun_F6137"/>
<dbReference type="eggNOG" id="COG0233">
    <property type="taxonomic scope" value="Bacteria"/>
</dbReference>
<dbReference type="HOGENOM" id="CLU_073981_2_0_3"/>
<dbReference type="OrthoDB" id="9804006at2"/>
<dbReference type="PhylomeDB" id="B2IVW4"/>
<dbReference type="Proteomes" id="UP000001191">
    <property type="component" value="Chromosome"/>
</dbReference>
<dbReference type="GO" id="GO:0005737">
    <property type="term" value="C:cytoplasm"/>
    <property type="evidence" value="ECO:0007669"/>
    <property type="project" value="UniProtKB-SubCell"/>
</dbReference>
<dbReference type="GO" id="GO:0043023">
    <property type="term" value="F:ribosomal large subunit binding"/>
    <property type="evidence" value="ECO:0007669"/>
    <property type="project" value="TreeGrafter"/>
</dbReference>
<dbReference type="GO" id="GO:0006415">
    <property type="term" value="P:translational termination"/>
    <property type="evidence" value="ECO:0007669"/>
    <property type="project" value="UniProtKB-UniRule"/>
</dbReference>
<dbReference type="CDD" id="cd00520">
    <property type="entry name" value="RRF"/>
    <property type="match status" value="1"/>
</dbReference>
<dbReference type="FunFam" id="1.10.132.20:FF:000001">
    <property type="entry name" value="Ribosome-recycling factor"/>
    <property type="match status" value="1"/>
</dbReference>
<dbReference type="FunFam" id="3.30.1360.40:FF:000001">
    <property type="entry name" value="Ribosome-recycling factor"/>
    <property type="match status" value="1"/>
</dbReference>
<dbReference type="Gene3D" id="3.30.1360.40">
    <property type="match status" value="1"/>
</dbReference>
<dbReference type="Gene3D" id="1.10.132.20">
    <property type="entry name" value="Ribosome-recycling factor"/>
    <property type="match status" value="1"/>
</dbReference>
<dbReference type="HAMAP" id="MF_00040">
    <property type="entry name" value="RRF"/>
    <property type="match status" value="1"/>
</dbReference>
<dbReference type="InterPro" id="IPR002661">
    <property type="entry name" value="Ribosome_recyc_fac"/>
</dbReference>
<dbReference type="InterPro" id="IPR023584">
    <property type="entry name" value="Ribosome_recyc_fac_dom"/>
</dbReference>
<dbReference type="InterPro" id="IPR036191">
    <property type="entry name" value="RRF_sf"/>
</dbReference>
<dbReference type="NCBIfam" id="TIGR00496">
    <property type="entry name" value="frr"/>
    <property type="match status" value="1"/>
</dbReference>
<dbReference type="PANTHER" id="PTHR20982:SF3">
    <property type="entry name" value="MITOCHONDRIAL RIBOSOME RECYCLING FACTOR PSEUDO 1"/>
    <property type="match status" value="1"/>
</dbReference>
<dbReference type="PANTHER" id="PTHR20982">
    <property type="entry name" value="RIBOSOME RECYCLING FACTOR"/>
    <property type="match status" value="1"/>
</dbReference>
<dbReference type="Pfam" id="PF01765">
    <property type="entry name" value="RRF"/>
    <property type="match status" value="1"/>
</dbReference>
<dbReference type="SUPFAM" id="SSF55194">
    <property type="entry name" value="Ribosome recycling factor, RRF"/>
    <property type="match status" value="1"/>
</dbReference>
<keyword id="KW-0963">Cytoplasm</keyword>
<keyword id="KW-0648">Protein biosynthesis</keyword>
<keyword id="KW-1185">Reference proteome</keyword>
<proteinExistence type="inferred from homology"/>
<accession>B2IVW4</accession>
<sequence>MILADAKSKMQSSVESTQRAFNTIRTGRANASLLDKVLVDYYGSPTPLKSLANISTPDASTILIQPYERNTLNIIEKAISLSDVGLTPSNDGSVIRLNIPPLTSDRRKEFVKMATKYAEEGRVAIRNIRRDAIDSIRKQEKASEISKDESKDQQDNLQKLTNEYTSRIDALLAEKEKDITTV</sequence>
<evidence type="ECO:0000255" key="1">
    <source>
        <dbReference type="HAMAP-Rule" id="MF_00040"/>
    </source>
</evidence>
<comment type="function">
    <text evidence="1">Responsible for the release of ribosomes from messenger RNA at the termination of protein biosynthesis. May increase the efficiency of translation by recycling ribosomes from one round of translation to another.</text>
</comment>
<comment type="subcellular location">
    <subcellularLocation>
        <location evidence="1">Cytoplasm</location>
    </subcellularLocation>
</comment>
<comment type="similarity">
    <text evidence="1">Belongs to the RRF family.</text>
</comment>